<proteinExistence type="evidence at protein level"/>
<protein>
    <recommendedName>
        <fullName evidence="1">Envelope glycoprotein L</fullName>
        <shortName evidence="1">gL</shortName>
    </recommendedName>
</protein>
<accession>P10185</accession>
<accession>Q09ID2</accession>
<accession>Q76WT7</accession>
<organism>
    <name type="scientific">Human herpesvirus 1 (strain 17)</name>
    <name type="common">HHV-1</name>
    <name type="synonym">Human herpes simplex virus 1</name>
    <dbReference type="NCBI Taxonomy" id="10299"/>
    <lineage>
        <taxon>Viruses</taxon>
        <taxon>Duplodnaviria</taxon>
        <taxon>Heunggongvirae</taxon>
        <taxon>Peploviricota</taxon>
        <taxon>Herviviricetes</taxon>
        <taxon>Herpesvirales</taxon>
        <taxon>Orthoherpesviridae</taxon>
        <taxon>Alphaherpesvirinae</taxon>
        <taxon>Simplexvirus</taxon>
        <taxon>Simplexvirus humanalpha1</taxon>
        <taxon>Human herpesvirus 1</taxon>
    </lineage>
</organism>
<reference key="1">
    <citation type="journal article" date="1988" name="J. Gen. Virol.">
        <title>The complete DNA sequence of the long unique region in the genome of herpes simplex virus type 1.</title>
        <authorList>
            <person name="McGeoch D.J."/>
            <person name="Dalrymple M.A."/>
            <person name="Davison A.J."/>
            <person name="Dolan A."/>
            <person name="Frame M.C."/>
            <person name="McNab D."/>
            <person name="Perry L.J."/>
            <person name="Scott J.E."/>
            <person name="Taylor P."/>
        </authorList>
    </citation>
    <scope>NUCLEOTIDE SEQUENCE [LARGE SCALE GENOMIC DNA]</scope>
</reference>
<reference key="2">
    <citation type="journal article" date="1988" name="J. Gen. Virol.">
        <title>The DNA sequences of the long repeat region and adjoining parts of the long unique region in the genome of herpes simplex virus type 1.</title>
        <authorList>
            <person name="Perry L.J."/>
            <person name="McGeoch D.J."/>
        </authorList>
    </citation>
    <scope>NUCLEOTIDE SEQUENCE [GENOMIC DNA]</scope>
</reference>
<reference key="3">
    <citation type="journal article" date="2007" name="Microbes Infect.">
        <title>Determination and analysis of the DNA sequence of highly attenuated herpes simplex virus type 1 mutant HF10, a potential oncolytic virus.</title>
        <authorList>
            <person name="Ushijima Y."/>
            <person name="Luo C."/>
            <person name="Goshima F."/>
            <person name="Yamauchi Y."/>
            <person name="Kimura H."/>
            <person name="Nishiyama Y."/>
        </authorList>
    </citation>
    <scope>NUCLEOTIDE SEQUENCE [LARGE SCALE GENOMIC DNA]</scope>
    <source>
        <strain>Nonneuroinvasive mutant HF10</strain>
    </source>
</reference>
<reference key="4">
    <citation type="submission" date="2008-12" db="EMBL/GenBank/DDBJ databases">
        <title>Herpes simplex virus type 1 bacterial artificial chromosome.</title>
        <authorList>
            <person name="Cunningham C."/>
            <person name="Davison A.J."/>
        </authorList>
    </citation>
    <scope>NUCLEOTIDE SEQUENCE [LARGE SCALE GENOMIC DNA]</scope>
    <source>
        <strain>17 syn+</strain>
    </source>
</reference>
<reference key="5">
    <citation type="journal article" date="2003" name="J. Virol.">
        <title>Structure-function analysis of herpes simplex virus type 1 gD and gH-gL: clues from gDgH chimeras.</title>
        <authorList>
            <person name="Cairns T.M."/>
            <person name="Milne R.S."/>
            <person name="Ponce-de-Leon M."/>
            <person name="Tobin D.K."/>
            <person name="Cohen G.H."/>
            <person name="Eisenberg R.J."/>
        </authorList>
    </citation>
    <scope>INTERACTION WITH GH</scope>
</reference>
<reference key="6">
    <citation type="journal article" date="2008" name="J. Virol.">
        <title>Comprehensive characterization of extracellular herpes simplex virus type 1 virions.</title>
        <authorList>
            <person name="Loret S."/>
            <person name="Guay G."/>
            <person name="Lippe R."/>
        </authorList>
    </citation>
    <scope>SUBCELLULAR LOCATION</scope>
    <source>
        <strain>F</strain>
    </source>
</reference>
<reference key="7">
    <citation type="journal article" date="2009" name="J. Biol. Chem.">
        <title>Herpes simplex virus gD forms distinct complexes with fusion executors gB and gH/gL in part through the C-terminal profusion domain.</title>
        <authorList>
            <person name="Gianni T."/>
            <person name="Amasio M."/>
            <person name="Campadelli-Fiume G."/>
        </authorList>
    </citation>
    <scope>FUNCTION</scope>
    <source>
        <strain>F</strain>
    </source>
</reference>
<reference key="8">
    <citation type="journal article" date="2009" name="J. Virol.">
        <title>Insertional mutations in herpes simplex virus 1 gL identify functional domains for association with gH and for membrane fusion.</title>
        <authorList>
            <person name="Fan Q."/>
            <person name="Lin E."/>
            <person name="Spear P.G."/>
        </authorList>
    </citation>
    <scope>INTERACTION WITH GH</scope>
    <scope>SUBCELLULAR LOCATION</scope>
</reference>
<reference key="9">
    <citation type="journal article" date="2015" name="Viruses">
        <title>HSV-1 gM and the gK/pUL20 complex are important for the localization of gD and gH/L to viral assembly sites.</title>
        <authorList>
            <person name="Lau S.Y."/>
            <person name="Crump C.M."/>
        </authorList>
    </citation>
    <scope>SUBCELLULAR LOCATION</scope>
</reference>
<reference key="10">
    <citation type="journal article" date="2015" name="Proc. Natl. Acad. Sci. U.S.A.">
        <title>Dissociation of HSV gL from gH by alphavbeta6- or alphavbeta8-integrin promotes gH activation and virus entry.</title>
        <authorList>
            <person name="Gianni T."/>
            <person name="Massaro R."/>
            <person name="Campadelli-Fiume G."/>
        </authorList>
    </citation>
    <scope>FUNCTION</scope>
</reference>
<evidence type="ECO:0000255" key="1">
    <source>
        <dbReference type="HAMAP-Rule" id="MF_04034"/>
    </source>
</evidence>
<evidence type="ECO:0000255" key="2">
    <source>
        <dbReference type="PROSITE-ProRule" id="PRU01368"/>
    </source>
</evidence>
<evidence type="ECO:0000256" key="3">
    <source>
        <dbReference type="SAM" id="MobiDB-lite"/>
    </source>
</evidence>
<evidence type="ECO:0000269" key="4">
    <source>
    </source>
</evidence>
<evidence type="ECO:0000269" key="5">
    <source>
    </source>
</evidence>
<evidence type="ECO:0000269" key="6">
    <source>
    </source>
</evidence>
<evidence type="ECO:0000269" key="7">
    <source>
    </source>
</evidence>
<evidence type="ECO:0000269" key="8">
    <source>
    </source>
</evidence>
<dbReference type="EMBL" id="X14112">
    <property type="protein sequence ID" value="CAA32337.1"/>
    <property type="molecule type" value="Genomic_DNA"/>
</dbReference>
<dbReference type="EMBL" id="D00373">
    <property type="protein sequence ID" value="BAA00272.1"/>
    <property type="molecule type" value="Genomic_DNA"/>
</dbReference>
<dbReference type="EMBL" id="DQ889502">
    <property type="protein sequence ID" value="ABI63463.1"/>
    <property type="molecule type" value="Genomic_DNA"/>
</dbReference>
<dbReference type="EMBL" id="FJ593289">
    <property type="protein sequence ID" value="ACM62223.1"/>
    <property type="molecule type" value="Genomic_DNA"/>
</dbReference>
<dbReference type="PIR" id="A28133">
    <property type="entry name" value="WMBEX1"/>
</dbReference>
<dbReference type="RefSeq" id="YP_009137075.1">
    <property type="nucleotide sequence ID" value="NC_001806.2"/>
</dbReference>
<dbReference type="SMR" id="P10185"/>
<dbReference type="BioGRID" id="971430">
    <property type="interactions" value="1"/>
</dbReference>
<dbReference type="ChEMBL" id="CHEMBL2364696"/>
<dbReference type="DrugCentral" id="P10185"/>
<dbReference type="TCDB" id="1.G.10.1.1">
    <property type="family name" value="the herpes simplex virus membrane fusion complex (hsv-mfc) family"/>
</dbReference>
<dbReference type="DNASU" id="2703393"/>
<dbReference type="GeneID" id="2703393"/>
<dbReference type="KEGG" id="vg:2703393"/>
<dbReference type="PRO" id="PR:P10185"/>
<dbReference type="Proteomes" id="UP000009294">
    <property type="component" value="Segment"/>
</dbReference>
<dbReference type="Proteomes" id="UP000180652">
    <property type="component" value="Segment"/>
</dbReference>
<dbReference type="GO" id="GO:0044177">
    <property type="term" value="C:host cell Golgi apparatus"/>
    <property type="evidence" value="ECO:0007669"/>
    <property type="project" value="UniProtKB-SubCell"/>
</dbReference>
<dbReference type="GO" id="GO:0020002">
    <property type="term" value="C:host cell plasma membrane"/>
    <property type="evidence" value="ECO:0007669"/>
    <property type="project" value="UniProtKB-SubCell"/>
</dbReference>
<dbReference type="GO" id="GO:0016020">
    <property type="term" value="C:membrane"/>
    <property type="evidence" value="ECO:0007669"/>
    <property type="project" value="UniProtKB-KW"/>
</dbReference>
<dbReference type="GO" id="GO:0019031">
    <property type="term" value="C:viral envelope"/>
    <property type="evidence" value="ECO:0007669"/>
    <property type="project" value="UniProtKB-KW"/>
</dbReference>
<dbReference type="GO" id="GO:0055036">
    <property type="term" value="C:virion membrane"/>
    <property type="evidence" value="ECO:0007669"/>
    <property type="project" value="UniProtKB-SubCell"/>
</dbReference>
<dbReference type="GO" id="GO:0019064">
    <property type="term" value="P:fusion of virus membrane with host plasma membrane"/>
    <property type="evidence" value="ECO:0007669"/>
    <property type="project" value="UniProtKB-KW"/>
</dbReference>
<dbReference type="GO" id="GO:0046718">
    <property type="term" value="P:symbiont entry into host cell"/>
    <property type="evidence" value="ECO:0007669"/>
    <property type="project" value="UniProtKB-KW"/>
</dbReference>
<dbReference type="Gene3D" id="3.30.390.170">
    <property type="match status" value="1"/>
</dbReference>
<dbReference type="HAMAP" id="MF_04034">
    <property type="entry name" value="HSV_GL_alphagamma"/>
    <property type="match status" value="1"/>
</dbReference>
<dbReference type="InterPro" id="IPR022200">
    <property type="entry name" value="Herpes_gL_C"/>
</dbReference>
<dbReference type="InterPro" id="IPR007923">
    <property type="entry name" value="Herpes_gL_N"/>
</dbReference>
<dbReference type="InterPro" id="IPR038311">
    <property type="entry name" value="Herpes_gL_N_sf"/>
</dbReference>
<dbReference type="InterPro" id="IPR034708">
    <property type="entry name" value="HSV_GL_alphagamma"/>
</dbReference>
<dbReference type="Pfam" id="PF12524">
    <property type="entry name" value="GlyL_C"/>
    <property type="match status" value="1"/>
</dbReference>
<dbReference type="Pfam" id="PF05259">
    <property type="entry name" value="Herpes_UL1"/>
    <property type="match status" value="1"/>
</dbReference>
<dbReference type="PROSITE" id="PS52024">
    <property type="entry name" value="GL_AHV"/>
    <property type="match status" value="1"/>
</dbReference>
<comment type="function">
    <text evidence="1 6 8">The heterodimer glycoprotein H-glycoprotein L is required for the fusion of viral and plasma membranes leading to virus entry into the host cell. Acts as a functional inhibitor of gH and maintains gH in an inhibited form. Upon binding to host integrins, gL dissociates from gH leading to activation of the viral fusion glycoproteins gB and gH.</text>
</comment>
<comment type="subunit">
    <text evidence="1 4">Interacts with glycoprotein H (gH); this interaction is necessary for the correct processing and cell surface expression of gH. The heterodimer gH/gL seems to interact with gB trimers during fusion.</text>
</comment>
<comment type="subcellular location">
    <subcellularLocation>
        <location evidence="1 5">Virion membrane</location>
        <topology evidence="1">Peripheral membrane protein</topology>
        <orientation evidence="1">Extracellular side</orientation>
    </subcellularLocation>
    <subcellularLocation>
        <location evidence="1 7">Host cell membrane</location>
        <topology evidence="1">Peripheral membrane protein</topology>
        <orientation evidence="1">Extracellular side</orientation>
    </subcellularLocation>
    <subcellularLocation>
        <location evidence="1">Host Golgi apparatus</location>
        <location evidence="1">Host trans-Golgi network</location>
    </subcellularLocation>
    <text evidence="1">gL associates with the extravirion surface through its binding to gH. During virion morphogenesis, this protein probably accumulates in the host trans-Golgi where secondary envelopment occurs.</text>
</comment>
<comment type="similarity">
    <text evidence="2">Belongs to the herpesviridae glycoprotein L (gL) family. Alphaherpesvirinae gL subfamily.</text>
</comment>
<name>GL_HHV11</name>
<gene>
    <name evidence="1" type="primary">gL</name>
    <name type="ORF">UL1</name>
</gene>
<keyword id="KW-1015">Disulfide bond</keyword>
<keyword id="KW-1169">Fusion of virus membrane with host cell membrane</keyword>
<keyword id="KW-1168">Fusion of virus membrane with host membrane</keyword>
<keyword id="KW-0325">Glycoprotein</keyword>
<keyword id="KW-1032">Host cell membrane</keyword>
<keyword id="KW-1040">Host Golgi apparatus</keyword>
<keyword id="KW-1043">Host membrane</keyword>
<keyword id="KW-0472">Membrane</keyword>
<keyword id="KW-1185">Reference proteome</keyword>
<keyword id="KW-0732">Signal</keyword>
<keyword id="KW-0261">Viral envelope protein</keyword>
<keyword id="KW-1162">Viral penetration into host cytoplasm</keyword>
<keyword id="KW-0946">Virion</keyword>
<keyword id="KW-1160">Virus entry into host cell</keyword>
<organismHost>
    <name type="scientific">Homo sapiens</name>
    <name type="common">Human</name>
    <dbReference type="NCBI Taxonomy" id="9606"/>
</organismHost>
<sequence length="224" mass="24934">MGILGWVGLIAVGVLCVRGGLPSTEYVIRSRVAREVGDILKVPCVPLPSDDLDWRYETPSAINYALIDGIFLRYHCPGLDTVLWDRHAQKAYWVNPFLFVAGFLEDLSYPAFPANTQETETRLALYKEIRQALDSRKQAASHTPVKAGCVNFDYSRTRRCVGRQDLGPTNGTSGRTPVLPPDDEAGLQPKPLTTPPPIIATSDPTPRRDAATKSRRRRPHSRRL</sequence>
<feature type="signal peptide" evidence="1">
    <location>
        <begin position="1"/>
        <end position="19"/>
    </location>
</feature>
<feature type="chain" id="PRO_0000038264" description="Envelope glycoprotein L" evidence="1">
    <location>
        <begin position="20"/>
        <end position="224"/>
    </location>
</feature>
<feature type="domain" description="gL alphaherpesvirus-type" evidence="2">
    <location>
        <begin position="23"/>
        <end position="201"/>
    </location>
</feature>
<feature type="region of interest" description="Interaction with gH" evidence="1">
    <location>
        <begin position="20"/>
        <end position="161"/>
    </location>
</feature>
<feature type="region of interest" description="Disordered" evidence="3">
    <location>
        <begin position="161"/>
        <end position="224"/>
    </location>
</feature>
<feature type="compositionally biased region" description="Basic residues" evidence="3">
    <location>
        <begin position="213"/>
        <end position="224"/>
    </location>
</feature>
<feature type="disulfide bond" evidence="2">
    <location>
        <begin position="44"/>
        <end position="76"/>
    </location>
</feature>
<feature type="disulfide bond" evidence="2">
    <location>
        <begin position="149"/>
        <end position="160"/>
    </location>
</feature>
<feature type="sequence variant" description="In strain: Nonneuroinvasive mutant HF10.">
    <original>K</original>
    <variation>R</variation>
    <location>
        <position position="90"/>
    </location>
</feature>
<feature type="sequence variant" description="In strain: Nonneuroinvasive mutant HF10.">
    <original>V</original>
    <variation>G</variation>
    <location>
        <position position="100"/>
    </location>
</feature>
<feature type="sequence variant" description="In strain: Nonneuroinvasive mutant HF10.">
    <original>Y</original>
    <variation>H</variation>
    <location>
        <position position="109"/>
    </location>
</feature>
<feature type="sequence variant" description="In strain: Nonneuroinvasive mutant HF10.">
    <original>N</original>
    <variation>D</variation>
    <location>
        <position position="115"/>
    </location>
</feature>
<feature type="sequence variant" description="In strain: Nonneuroinvasive mutant HF10.">
    <original>P</original>
    <variation>L</variation>
    <location>
        <position position="168"/>
    </location>
</feature>
<feature type="sequence variant" description="In strain: Nonneuroinvasive mutant HF10.">
    <original>G</original>
    <variation>R</variation>
    <location>
        <position position="171"/>
    </location>
</feature>
<feature type="sequence variant" description="In strain: Nonneuroinvasive mutant HF10.">
    <original>P</original>
    <variation>S</variation>
    <location>
        <position position="181"/>
    </location>
</feature>
<feature type="sequence variant" description="In strain: Nonneuroinvasive mutant HF10.">
    <original>P</original>
    <variation>S</variation>
    <location>
        <position position="196"/>
    </location>
</feature>
<feature type="sequence variant" description="In strain: Nonneuroinvasive mutant HF10.">
    <original>L</original>
    <variation>I</variation>
    <location>
        <position position="224"/>
    </location>
</feature>